<comment type="similarity">
    <text evidence="1">Belongs to the bacterial ribosomal protein bS16 family.</text>
</comment>
<keyword id="KW-0687">Ribonucleoprotein</keyword>
<keyword id="KW-0689">Ribosomal protein</keyword>
<accession>Q3M4Y1</accession>
<evidence type="ECO:0000255" key="1">
    <source>
        <dbReference type="HAMAP-Rule" id="MF_00385"/>
    </source>
</evidence>
<evidence type="ECO:0000305" key="2"/>
<name>RS16_TRIV2</name>
<sequence length="86" mass="9997">MIKLRLKRFGKKREASYRIVAMNNLSRRDGRPLEELGYYNPRTDEVRLDVPGIVKRLQQGAQPTDTVRRILQKQNVFEQVSAKPAS</sequence>
<protein>
    <recommendedName>
        <fullName evidence="1">Small ribosomal subunit protein bS16</fullName>
    </recommendedName>
    <alternativeName>
        <fullName evidence="2">30S ribosomal protein S16</fullName>
    </alternativeName>
</protein>
<reference key="1">
    <citation type="journal article" date="2014" name="Stand. Genomic Sci.">
        <title>Complete genome sequence of Anabaena variabilis ATCC 29413.</title>
        <authorList>
            <person name="Thiel T."/>
            <person name="Pratte B.S."/>
            <person name="Zhong J."/>
            <person name="Goodwin L."/>
            <person name="Copeland A."/>
            <person name="Lucas S."/>
            <person name="Han C."/>
            <person name="Pitluck S."/>
            <person name="Land M.L."/>
            <person name="Kyrpides N.C."/>
            <person name="Woyke T."/>
        </authorList>
    </citation>
    <scope>NUCLEOTIDE SEQUENCE [LARGE SCALE GENOMIC DNA]</scope>
    <source>
        <strain>ATCC 29413 / PCC 7937</strain>
    </source>
</reference>
<feature type="chain" id="PRO_0000243766" description="Small ribosomal subunit protein bS16">
    <location>
        <begin position="1"/>
        <end position="86"/>
    </location>
</feature>
<organism>
    <name type="scientific">Trichormus variabilis (strain ATCC 29413 / PCC 7937)</name>
    <name type="common">Anabaena variabilis</name>
    <dbReference type="NCBI Taxonomy" id="240292"/>
    <lineage>
        <taxon>Bacteria</taxon>
        <taxon>Bacillati</taxon>
        <taxon>Cyanobacteriota</taxon>
        <taxon>Cyanophyceae</taxon>
        <taxon>Nostocales</taxon>
        <taxon>Nostocaceae</taxon>
        <taxon>Trichormus</taxon>
    </lineage>
</organism>
<proteinExistence type="inferred from homology"/>
<dbReference type="EMBL" id="CP000117">
    <property type="protein sequence ID" value="ABA23955.1"/>
    <property type="molecule type" value="Genomic_DNA"/>
</dbReference>
<dbReference type="RefSeq" id="WP_010996117.1">
    <property type="nucleotide sequence ID" value="NC_007413.1"/>
</dbReference>
<dbReference type="SMR" id="Q3M4Y1"/>
<dbReference type="STRING" id="240292.Ava_4357"/>
<dbReference type="GeneID" id="58721922"/>
<dbReference type="KEGG" id="ava:Ava_4357"/>
<dbReference type="eggNOG" id="COG0228">
    <property type="taxonomic scope" value="Bacteria"/>
</dbReference>
<dbReference type="HOGENOM" id="CLU_100590_5_2_3"/>
<dbReference type="Proteomes" id="UP000002533">
    <property type="component" value="Chromosome"/>
</dbReference>
<dbReference type="GO" id="GO:0005737">
    <property type="term" value="C:cytoplasm"/>
    <property type="evidence" value="ECO:0007669"/>
    <property type="project" value="UniProtKB-ARBA"/>
</dbReference>
<dbReference type="GO" id="GO:0015935">
    <property type="term" value="C:small ribosomal subunit"/>
    <property type="evidence" value="ECO:0007669"/>
    <property type="project" value="TreeGrafter"/>
</dbReference>
<dbReference type="GO" id="GO:0003735">
    <property type="term" value="F:structural constituent of ribosome"/>
    <property type="evidence" value="ECO:0007669"/>
    <property type="project" value="InterPro"/>
</dbReference>
<dbReference type="GO" id="GO:0006412">
    <property type="term" value="P:translation"/>
    <property type="evidence" value="ECO:0007669"/>
    <property type="project" value="UniProtKB-UniRule"/>
</dbReference>
<dbReference type="Gene3D" id="3.30.1320.10">
    <property type="match status" value="1"/>
</dbReference>
<dbReference type="HAMAP" id="MF_00385">
    <property type="entry name" value="Ribosomal_bS16"/>
    <property type="match status" value="1"/>
</dbReference>
<dbReference type="InterPro" id="IPR000307">
    <property type="entry name" value="Ribosomal_bS16"/>
</dbReference>
<dbReference type="InterPro" id="IPR020592">
    <property type="entry name" value="Ribosomal_bS16_CS"/>
</dbReference>
<dbReference type="InterPro" id="IPR023803">
    <property type="entry name" value="Ribosomal_bS16_dom_sf"/>
</dbReference>
<dbReference type="NCBIfam" id="TIGR00002">
    <property type="entry name" value="S16"/>
    <property type="match status" value="1"/>
</dbReference>
<dbReference type="PANTHER" id="PTHR12919">
    <property type="entry name" value="30S RIBOSOMAL PROTEIN S16"/>
    <property type="match status" value="1"/>
</dbReference>
<dbReference type="PANTHER" id="PTHR12919:SF20">
    <property type="entry name" value="SMALL RIBOSOMAL SUBUNIT PROTEIN BS16M"/>
    <property type="match status" value="1"/>
</dbReference>
<dbReference type="Pfam" id="PF00886">
    <property type="entry name" value="Ribosomal_S16"/>
    <property type="match status" value="1"/>
</dbReference>
<dbReference type="SUPFAM" id="SSF54565">
    <property type="entry name" value="Ribosomal protein S16"/>
    <property type="match status" value="1"/>
</dbReference>
<dbReference type="PROSITE" id="PS00732">
    <property type="entry name" value="RIBOSOMAL_S16"/>
    <property type="match status" value="1"/>
</dbReference>
<gene>
    <name evidence="1" type="primary">rpsP</name>
    <name evidence="1" type="synonym">rps16</name>
    <name type="ordered locus">Ava_4357</name>
</gene>